<dbReference type="EC" id="3.6.4.13" evidence="1"/>
<dbReference type="EMBL" id="AB013609">
    <property type="protein sequence ID" value="BAA77391.1"/>
    <property type="molecule type" value="mRNA"/>
</dbReference>
<dbReference type="RefSeq" id="NP_001166415.1">
    <property type="nucleotide sequence ID" value="NM_001172944.1"/>
</dbReference>
<dbReference type="SMR" id="Q9WTM2"/>
<dbReference type="FunCoup" id="Q9WTM2">
    <property type="interactions" value="4274"/>
</dbReference>
<dbReference type="STRING" id="10141.ENSCPOP00000009507"/>
<dbReference type="GeneID" id="100135517"/>
<dbReference type="KEGG" id="cpoc:100135517"/>
<dbReference type="CTD" id="1656"/>
<dbReference type="eggNOG" id="KOG0326">
    <property type="taxonomic scope" value="Eukaryota"/>
</dbReference>
<dbReference type="InParanoid" id="Q9WTM2"/>
<dbReference type="OrthoDB" id="10265785at2759"/>
<dbReference type="Proteomes" id="UP000005447">
    <property type="component" value="Unassembled WGS sequence"/>
</dbReference>
<dbReference type="GO" id="GO:0005737">
    <property type="term" value="C:cytoplasm"/>
    <property type="evidence" value="ECO:0000250"/>
    <property type="project" value="UniProtKB"/>
</dbReference>
<dbReference type="GO" id="GO:0036464">
    <property type="term" value="C:cytoplasmic ribonucleoprotein granule"/>
    <property type="evidence" value="ECO:0000250"/>
    <property type="project" value="UniProtKB"/>
</dbReference>
<dbReference type="GO" id="GO:0005634">
    <property type="term" value="C:nucleus"/>
    <property type="evidence" value="ECO:0000250"/>
    <property type="project" value="UniProtKB"/>
</dbReference>
<dbReference type="GO" id="GO:0000932">
    <property type="term" value="C:P-body"/>
    <property type="evidence" value="ECO:0000250"/>
    <property type="project" value="UniProtKB"/>
</dbReference>
<dbReference type="GO" id="GO:0005524">
    <property type="term" value="F:ATP binding"/>
    <property type="evidence" value="ECO:0007669"/>
    <property type="project" value="UniProtKB-KW"/>
</dbReference>
<dbReference type="GO" id="GO:0016887">
    <property type="term" value="F:ATP hydrolysis activity"/>
    <property type="evidence" value="ECO:0007669"/>
    <property type="project" value="RHEA"/>
</dbReference>
<dbReference type="GO" id="GO:0003723">
    <property type="term" value="F:RNA binding"/>
    <property type="evidence" value="ECO:0007669"/>
    <property type="project" value="UniProtKB-KW"/>
</dbReference>
<dbReference type="GO" id="GO:0003724">
    <property type="term" value="F:RNA helicase activity"/>
    <property type="evidence" value="ECO:0007669"/>
    <property type="project" value="UniProtKB-EC"/>
</dbReference>
<dbReference type="GO" id="GO:0035278">
    <property type="term" value="P:miRNA-mediated gene silencing by inhibition of translation"/>
    <property type="evidence" value="ECO:0000250"/>
    <property type="project" value="UniProtKB"/>
</dbReference>
<dbReference type="GO" id="GO:0017148">
    <property type="term" value="P:negative regulation of translation"/>
    <property type="evidence" value="ECO:0000250"/>
    <property type="project" value="UniProtKB"/>
</dbReference>
<dbReference type="GO" id="GO:0033962">
    <property type="term" value="P:P-body assembly"/>
    <property type="evidence" value="ECO:0000250"/>
    <property type="project" value="UniProtKB"/>
</dbReference>
<dbReference type="CDD" id="cd17940">
    <property type="entry name" value="DEADc_DDX6"/>
    <property type="match status" value="1"/>
</dbReference>
<dbReference type="CDD" id="cd18787">
    <property type="entry name" value="SF2_C_DEAD"/>
    <property type="match status" value="1"/>
</dbReference>
<dbReference type="FunFam" id="3.40.50.300:FF:000114">
    <property type="entry name" value="ATP-dependent RNA helicase DDX6"/>
    <property type="match status" value="1"/>
</dbReference>
<dbReference type="FunFam" id="3.40.50.300:FF:000364">
    <property type="entry name" value="ATP-dependent RNA helicase DDX6"/>
    <property type="match status" value="1"/>
</dbReference>
<dbReference type="Gene3D" id="3.40.50.300">
    <property type="entry name" value="P-loop containing nucleotide triphosphate hydrolases"/>
    <property type="match status" value="2"/>
</dbReference>
<dbReference type="InterPro" id="IPR011545">
    <property type="entry name" value="DEAD/DEAH_box_helicase_dom"/>
</dbReference>
<dbReference type="InterPro" id="IPR014001">
    <property type="entry name" value="Helicase_ATP-bd"/>
</dbReference>
<dbReference type="InterPro" id="IPR001650">
    <property type="entry name" value="Helicase_C-like"/>
</dbReference>
<dbReference type="InterPro" id="IPR027417">
    <property type="entry name" value="P-loop_NTPase"/>
</dbReference>
<dbReference type="InterPro" id="IPR000629">
    <property type="entry name" value="RNA-helicase_DEAD-box_CS"/>
</dbReference>
<dbReference type="InterPro" id="IPR014014">
    <property type="entry name" value="RNA_helicase_DEAD_Q_motif"/>
</dbReference>
<dbReference type="PANTHER" id="PTHR47960">
    <property type="entry name" value="DEAD-BOX ATP-DEPENDENT RNA HELICASE 50"/>
    <property type="match status" value="1"/>
</dbReference>
<dbReference type="Pfam" id="PF00270">
    <property type="entry name" value="DEAD"/>
    <property type="match status" value="1"/>
</dbReference>
<dbReference type="Pfam" id="PF00271">
    <property type="entry name" value="Helicase_C"/>
    <property type="match status" value="1"/>
</dbReference>
<dbReference type="SMART" id="SM00487">
    <property type="entry name" value="DEXDc"/>
    <property type="match status" value="1"/>
</dbReference>
<dbReference type="SMART" id="SM00490">
    <property type="entry name" value="HELICc"/>
    <property type="match status" value="1"/>
</dbReference>
<dbReference type="SUPFAM" id="SSF52540">
    <property type="entry name" value="P-loop containing nucleoside triphosphate hydrolases"/>
    <property type="match status" value="1"/>
</dbReference>
<dbReference type="PROSITE" id="PS00039">
    <property type="entry name" value="DEAD_ATP_HELICASE"/>
    <property type="match status" value="1"/>
</dbReference>
<dbReference type="PROSITE" id="PS51192">
    <property type="entry name" value="HELICASE_ATP_BIND_1"/>
    <property type="match status" value="1"/>
</dbReference>
<dbReference type="PROSITE" id="PS51194">
    <property type="entry name" value="HELICASE_CTER"/>
    <property type="match status" value="1"/>
</dbReference>
<dbReference type="PROSITE" id="PS51195">
    <property type="entry name" value="Q_MOTIF"/>
    <property type="match status" value="1"/>
</dbReference>
<protein>
    <recommendedName>
        <fullName>Probable ATP-dependent RNA helicase DDX6</fullName>
        <ecNumber evidence="1">3.6.4.13</ecNumber>
    </recommendedName>
    <alternativeName>
        <fullName>DEAD box protein 6</fullName>
    </alternativeName>
    <alternativeName>
        <fullName>Oncogene RCK homolog</fullName>
    </alternativeName>
</protein>
<name>DDX6_CAVPO</name>
<evidence type="ECO:0000250" key="1">
    <source>
        <dbReference type="UniProtKB" id="P26196"/>
    </source>
</evidence>
<evidence type="ECO:0000250" key="2">
    <source>
        <dbReference type="UniProtKB" id="P54823"/>
    </source>
</evidence>
<evidence type="ECO:0000255" key="3">
    <source>
        <dbReference type="PROSITE-ProRule" id="PRU00541"/>
    </source>
</evidence>
<evidence type="ECO:0000255" key="4">
    <source>
        <dbReference type="PROSITE-ProRule" id="PRU00542"/>
    </source>
</evidence>
<evidence type="ECO:0000256" key="5">
    <source>
        <dbReference type="SAM" id="MobiDB-lite"/>
    </source>
</evidence>
<evidence type="ECO:0000305" key="6"/>
<comment type="function">
    <text evidence="1">Essential for the formation of P-bodies, cytosolic membrane-less ribonucleoprotein granules involved in RNA metabolism through the coordinated storage of mRNAs encoding regulatory functions. Plays a role in P-bodies to coordinate the storage of translationally inactive mRNAs in the cytoplasm and prevent their degradation. In the process of mRNA degradation, plays a role in mRNA decapping. Blocks autophagy in nutrient-rich conditions by repressing the expression of ATG-related genes through degradation of their transcripts.</text>
</comment>
<comment type="catalytic activity">
    <reaction evidence="1">
        <text>ATP + H2O = ADP + phosphate + H(+)</text>
        <dbReference type="Rhea" id="RHEA:13065"/>
        <dbReference type="ChEBI" id="CHEBI:15377"/>
        <dbReference type="ChEBI" id="CHEBI:15378"/>
        <dbReference type="ChEBI" id="CHEBI:30616"/>
        <dbReference type="ChEBI" id="CHEBI:43474"/>
        <dbReference type="ChEBI" id="CHEBI:456216"/>
        <dbReference type="EC" id="3.6.4.13"/>
    </reaction>
</comment>
<comment type="subunit">
    <text evidence="1 2">Interacts with LSM14A, LSM14B, EIF4ENIF1/4E-T, PATL1, EDC3 and EDC4 (By similarity). Forms a complex with DCP1A, DCP2, EDC3 and EDC4/HEDLS. Interacts with LIMD1, WTIP and AJUBA. Interacts with APOBEC3G in an RNA-dependent manner (By similarity). Interacts with RC3H1 (By similarity). Interacts with ATXN2L. Interacts with MCRIP1. Interacts with MCRIP2. Interacts with NUFIP2. Interacts with TRIM71 (via NHL repeats) in an RNA-dependent manner (By similarity).</text>
</comment>
<comment type="subcellular location">
    <subcellularLocation>
        <location evidence="1">Cytoplasm</location>
        <location evidence="1">P-body</location>
    </subcellularLocation>
    <subcellularLocation>
        <location evidence="1">Cytoplasm</location>
    </subcellularLocation>
    <subcellularLocation>
        <location evidence="1">Nucleus</location>
    </subcellularLocation>
    <subcellularLocation>
        <location evidence="2">Cytoplasm</location>
        <location evidence="2">Cytoplasmic ribonucleoprotein granule</location>
    </subcellularLocation>
    <text evidence="1">Imported in the nucleus via interaction with EIF4ENIF1/4E-T via a piggy-back mechanism. Upon cellular stress, relocalizes to stress granules.</text>
</comment>
<comment type="PTM">
    <text evidence="1">Sumoylated.</text>
</comment>
<comment type="similarity">
    <text evidence="6">Belongs to the DEAD box helicase family. DDX6/DHH1 subfamily.</text>
</comment>
<organism>
    <name type="scientific">Cavia porcellus</name>
    <name type="common">Guinea pig</name>
    <dbReference type="NCBI Taxonomy" id="10141"/>
    <lineage>
        <taxon>Eukaryota</taxon>
        <taxon>Metazoa</taxon>
        <taxon>Chordata</taxon>
        <taxon>Craniata</taxon>
        <taxon>Vertebrata</taxon>
        <taxon>Euteleostomi</taxon>
        <taxon>Mammalia</taxon>
        <taxon>Eutheria</taxon>
        <taxon>Euarchontoglires</taxon>
        <taxon>Glires</taxon>
        <taxon>Rodentia</taxon>
        <taxon>Hystricomorpha</taxon>
        <taxon>Caviidae</taxon>
        <taxon>Cavia</taxon>
    </lineage>
</organism>
<reference key="1">
    <citation type="submission" date="1998-05" db="EMBL/GenBank/DDBJ databases">
        <title>Cloning of guinea pig RCK gene.</title>
        <authorList>
            <person name="Akao Y."/>
        </authorList>
    </citation>
    <scope>NUCLEOTIDE SEQUENCE [MRNA]</scope>
</reference>
<feature type="chain" id="PRO_0000274531" description="Probable ATP-dependent RNA helicase DDX6">
    <location>
        <begin position="1" status="less than"/>
        <end position="472"/>
    </location>
</feature>
<feature type="domain" description="Helicase ATP-binding" evidence="3">
    <location>
        <begin position="116"/>
        <end position="287"/>
    </location>
</feature>
<feature type="domain" description="Helicase C-terminal" evidence="4">
    <location>
        <begin position="297"/>
        <end position="457"/>
    </location>
</feature>
<feature type="region of interest" description="Disordered" evidence="5">
    <location>
        <begin position="1"/>
        <end position="39"/>
    </location>
</feature>
<feature type="region of interest" description="Disordered" evidence="5">
    <location>
        <begin position="45"/>
        <end position="64"/>
    </location>
</feature>
<feature type="short sequence motif" description="Q motif">
    <location>
        <begin position="85"/>
        <end position="113"/>
    </location>
</feature>
<feature type="short sequence motif" description="DEAD box">
    <location>
        <begin position="235"/>
        <end position="238"/>
    </location>
</feature>
<feature type="compositionally biased region" description="Low complexity" evidence="5">
    <location>
        <begin position="26"/>
        <end position="39"/>
    </location>
</feature>
<feature type="binding site" evidence="3">
    <location>
        <begin position="129"/>
        <end position="136"/>
    </location>
    <ligand>
        <name>ATP</name>
        <dbReference type="ChEBI" id="CHEBI:30616"/>
    </ligand>
</feature>
<feature type="modified residue" description="Phosphothreonine" evidence="1">
    <location>
        <position position="25"/>
    </location>
</feature>
<feature type="non-terminal residue">
    <location>
        <position position="1"/>
    </location>
</feature>
<accession>Q9WTM2</accession>
<proteinExistence type="evidence at transcript level"/>
<sequence>MGLSSQNGQLRGPVKPSGGPGGGGTQTQQQMNQLKNTNTINNGTQQQAQSMTTTIKPGDDWKKTLKLPPKDLRIKTSDVTSTKGNEFEDYCLKRELLMGIFEMGWEKPSPIQEESIPIALTGRDILARAKNGTGKSGAYLIPLLERLDLKKDNIQAMVIVPTRELALQVSQICIQVSKHMGGAKVMATTGGTNLRDDIMRLDDTVHVVIATPGRILDLIKKGVAKVDHVQMIVLDEADKLLSQDFVQIMEDIILTLPKNRQILLYSATFPLSVQKFMNSHLQKPYEINLMEELTLKGVTQYYAYVTERQKVHCLNTLFPRLQTNQSIIFCNSSQRVELLAKKISQLGYSCFYIHAKMRQEHRNRVFHDFRNGLCRNLVCTDLFTRGIDIQAVNVVINFDFPKLAETYLHRIGRSGRFGHLGLAINLITYDDRFNLKSIEEQLGTEIKPIPSNIDKSLYVAEYHSEPVEDEKP</sequence>
<keyword id="KW-0067">ATP-binding</keyword>
<keyword id="KW-0963">Cytoplasm</keyword>
<keyword id="KW-0347">Helicase</keyword>
<keyword id="KW-0378">Hydrolase</keyword>
<keyword id="KW-0547">Nucleotide-binding</keyword>
<keyword id="KW-0539">Nucleus</keyword>
<keyword id="KW-0597">Phosphoprotein</keyword>
<keyword id="KW-1185">Reference proteome</keyword>
<keyword id="KW-0694">RNA-binding</keyword>
<keyword id="KW-0832">Ubl conjugation</keyword>
<gene>
    <name type="primary">DDX6</name>
    <name type="synonym">RCK</name>
</gene>